<dbReference type="EC" id="4.2.3.5" evidence="1"/>
<dbReference type="EMBL" id="CP000758">
    <property type="protein sequence ID" value="ABS13270.1"/>
    <property type="molecule type" value="Genomic_DNA"/>
</dbReference>
<dbReference type="RefSeq" id="WP_012090812.1">
    <property type="nucleotide sequence ID" value="NC_009667.1"/>
</dbReference>
<dbReference type="SMR" id="A6WWB6"/>
<dbReference type="STRING" id="439375.Oant_0539"/>
<dbReference type="KEGG" id="oan:Oant_0539"/>
<dbReference type="PATRIC" id="fig|439375.7.peg.576"/>
<dbReference type="eggNOG" id="COG0082">
    <property type="taxonomic scope" value="Bacteria"/>
</dbReference>
<dbReference type="HOGENOM" id="CLU_034547_0_0_5"/>
<dbReference type="PhylomeDB" id="A6WWB6"/>
<dbReference type="UniPathway" id="UPA00053">
    <property type="reaction ID" value="UER00090"/>
</dbReference>
<dbReference type="Proteomes" id="UP000002301">
    <property type="component" value="Chromosome 1"/>
</dbReference>
<dbReference type="GO" id="GO:0005829">
    <property type="term" value="C:cytosol"/>
    <property type="evidence" value="ECO:0007669"/>
    <property type="project" value="TreeGrafter"/>
</dbReference>
<dbReference type="GO" id="GO:0004107">
    <property type="term" value="F:chorismate synthase activity"/>
    <property type="evidence" value="ECO:0007669"/>
    <property type="project" value="UniProtKB-UniRule"/>
</dbReference>
<dbReference type="GO" id="GO:0010181">
    <property type="term" value="F:FMN binding"/>
    <property type="evidence" value="ECO:0007669"/>
    <property type="project" value="TreeGrafter"/>
</dbReference>
<dbReference type="GO" id="GO:0008652">
    <property type="term" value="P:amino acid biosynthetic process"/>
    <property type="evidence" value="ECO:0007669"/>
    <property type="project" value="UniProtKB-KW"/>
</dbReference>
<dbReference type="GO" id="GO:0009073">
    <property type="term" value="P:aromatic amino acid family biosynthetic process"/>
    <property type="evidence" value="ECO:0007669"/>
    <property type="project" value="UniProtKB-KW"/>
</dbReference>
<dbReference type="GO" id="GO:0009423">
    <property type="term" value="P:chorismate biosynthetic process"/>
    <property type="evidence" value="ECO:0007669"/>
    <property type="project" value="UniProtKB-UniRule"/>
</dbReference>
<dbReference type="CDD" id="cd07304">
    <property type="entry name" value="Chorismate_synthase"/>
    <property type="match status" value="1"/>
</dbReference>
<dbReference type="Gene3D" id="3.60.150.10">
    <property type="entry name" value="Chorismate synthase AroC"/>
    <property type="match status" value="1"/>
</dbReference>
<dbReference type="HAMAP" id="MF_00300">
    <property type="entry name" value="Chorismate_synth"/>
    <property type="match status" value="1"/>
</dbReference>
<dbReference type="InterPro" id="IPR000453">
    <property type="entry name" value="Chorismate_synth"/>
</dbReference>
<dbReference type="InterPro" id="IPR035904">
    <property type="entry name" value="Chorismate_synth_AroC_sf"/>
</dbReference>
<dbReference type="InterPro" id="IPR020541">
    <property type="entry name" value="Chorismate_synthase_CS"/>
</dbReference>
<dbReference type="NCBIfam" id="TIGR00033">
    <property type="entry name" value="aroC"/>
    <property type="match status" value="1"/>
</dbReference>
<dbReference type="NCBIfam" id="NF003793">
    <property type="entry name" value="PRK05382.1"/>
    <property type="match status" value="1"/>
</dbReference>
<dbReference type="PANTHER" id="PTHR21085">
    <property type="entry name" value="CHORISMATE SYNTHASE"/>
    <property type="match status" value="1"/>
</dbReference>
<dbReference type="PANTHER" id="PTHR21085:SF0">
    <property type="entry name" value="CHORISMATE SYNTHASE"/>
    <property type="match status" value="1"/>
</dbReference>
<dbReference type="Pfam" id="PF01264">
    <property type="entry name" value="Chorismate_synt"/>
    <property type="match status" value="1"/>
</dbReference>
<dbReference type="PIRSF" id="PIRSF001456">
    <property type="entry name" value="Chorismate_synth"/>
    <property type="match status" value="1"/>
</dbReference>
<dbReference type="SUPFAM" id="SSF103263">
    <property type="entry name" value="Chorismate synthase, AroC"/>
    <property type="match status" value="1"/>
</dbReference>
<dbReference type="PROSITE" id="PS00787">
    <property type="entry name" value="CHORISMATE_SYNTHASE_1"/>
    <property type="match status" value="1"/>
</dbReference>
<dbReference type="PROSITE" id="PS00788">
    <property type="entry name" value="CHORISMATE_SYNTHASE_2"/>
    <property type="match status" value="1"/>
</dbReference>
<dbReference type="PROSITE" id="PS00789">
    <property type="entry name" value="CHORISMATE_SYNTHASE_3"/>
    <property type="match status" value="1"/>
</dbReference>
<organism>
    <name type="scientific">Brucella anthropi (strain ATCC 49188 / DSM 6882 / CCUG 24695 / JCM 21032 / LMG 3331 / NBRC 15819 / NCTC 12168 / Alc 37)</name>
    <name type="common">Ochrobactrum anthropi</name>
    <dbReference type="NCBI Taxonomy" id="439375"/>
    <lineage>
        <taxon>Bacteria</taxon>
        <taxon>Pseudomonadati</taxon>
        <taxon>Pseudomonadota</taxon>
        <taxon>Alphaproteobacteria</taxon>
        <taxon>Hyphomicrobiales</taxon>
        <taxon>Brucellaceae</taxon>
        <taxon>Brucella/Ochrobactrum group</taxon>
        <taxon>Brucella</taxon>
    </lineage>
</organism>
<feature type="chain" id="PRO_1000022519" description="Chorismate synthase">
    <location>
        <begin position="1"/>
        <end position="364"/>
    </location>
</feature>
<feature type="binding site" evidence="1">
    <location>
        <position position="48"/>
    </location>
    <ligand>
        <name>NADP(+)</name>
        <dbReference type="ChEBI" id="CHEBI:58349"/>
    </ligand>
</feature>
<feature type="binding site" evidence="1">
    <location>
        <begin position="131"/>
        <end position="133"/>
    </location>
    <ligand>
        <name>FMN</name>
        <dbReference type="ChEBI" id="CHEBI:58210"/>
    </ligand>
</feature>
<feature type="binding site" evidence="1">
    <location>
        <begin position="243"/>
        <end position="244"/>
    </location>
    <ligand>
        <name>FMN</name>
        <dbReference type="ChEBI" id="CHEBI:58210"/>
    </ligand>
</feature>
<feature type="binding site" evidence="1">
    <location>
        <position position="288"/>
    </location>
    <ligand>
        <name>FMN</name>
        <dbReference type="ChEBI" id="CHEBI:58210"/>
    </ligand>
</feature>
<feature type="binding site" evidence="1">
    <location>
        <begin position="303"/>
        <end position="307"/>
    </location>
    <ligand>
        <name>FMN</name>
        <dbReference type="ChEBI" id="CHEBI:58210"/>
    </ligand>
</feature>
<feature type="binding site" evidence="1">
    <location>
        <position position="329"/>
    </location>
    <ligand>
        <name>FMN</name>
        <dbReference type="ChEBI" id="CHEBI:58210"/>
    </ligand>
</feature>
<protein>
    <recommendedName>
        <fullName evidence="1">Chorismate synthase</fullName>
        <shortName evidence="1">CS</shortName>
        <ecNumber evidence="1">4.2.3.5</ecNumber>
    </recommendedName>
    <alternativeName>
        <fullName evidence="1">5-enolpyruvylshikimate-3-phosphate phospholyase</fullName>
    </alternativeName>
</protein>
<keyword id="KW-0028">Amino-acid biosynthesis</keyword>
<keyword id="KW-0057">Aromatic amino acid biosynthesis</keyword>
<keyword id="KW-0274">FAD</keyword>
<keyword id="KW-0285">Flavoprotein</keyword>
<keyword id="KW-0288">FMN</keyword>
<keyword id="KW-0456">Lyase</keyword>
<keyword id="KW-0521">NADP</keyword>
<keyword id="KW-1185">Reference proteome</keyword>
<evidence type="ECO:0000255" key="1">
    <source>
        <dbReference type="HAMAP-Rule" id="MF_00300"/>
    </source>
</evidence>
<proteinExistence type="inferred from homology"/>
<name>AROC_BRUA4</name>
<gene>
    <name evidence="1" type="primary">aroC</name>
    <name type="ordered locus">Oant_0539</name>
</gene>
<reference key="1">
    <citation type="journal article" date="2011" name="J. Bacteriol.">
        <title>Genome of Ochrobactrum anthropi ATCC 49188 T, a versatile opportunistic pathogen and symbiont of several eukaryotic hosts.</title>
        <authorList>
            <person name="Chain P.S."/>
            <person name="Lang D.M."/>
            <person name="Comerci D.J."/>
            <person name="Malfatti S.A."/>
            <person name="Vergez L.M."/>
            <person name="Shin M."/>
            <person name="Ugalde R.A."/>
            <person name="Garcia E."/>
            <person name="Tolmasky M.E."/>
        </authorList>
    </citation>
    <scope>NUCLEOTIDE SEQUENCE [LARGE SCALE GENOMIC DNA]</scope>
    <source>
        <strain>ATCC 49188 / DSM 6882 / CCUG 24695 / JCM 21032 / LMG 3331 / NBRC 15819 / NCTC 12168 / Alc 37</strain>
    </source>
</reference>
<sequence>MSHNSFGHLFRVTTWGESHGLALGCVVDGCPPGITFTEAEIQAYLDKRKPGQSKYTTQRREPDQVRVLSGVLLGDDGVTMTTTGTPISMMIENTDQRSKDYGEIARQYRPGHADYTYDVKYGIRDYRGGGRSSARETAARVAAGAIARKVVPGLEVKGALVAMGVHGIDRRRWNWSEVDNNPFFSPDAGSVELFADYLDGIRKSGSSVGAVIEIIAEGVPAGIGAPIYGKLDQDIASLLMSINAVKGVEIGNGFEAARLTGEENADEMRIGNDGKPLFLSNHAGGILGGIATGAPVVARFAVKPTSSILTPRRSIDKDGKEVDVMTKGRHDPCVGIRAVPIGEAMVACAIADHYLRHRGQTGRV</sequence>
<comment type="function">
    <text evidence="1">Catalyzes the anti-1,4-elimination of the C-3 phosphate and the C-6 proR hydrogen from 5-enolpyruvylshikimate-3-phosphate (EPSP) to yield chorismate, which is the branch point compound that serves as the starting substrate for the three terminal pathways of aromatic amino acid biosynthesis. This reaction introduces a second double bond into the aromatic ring system.</text>
</comment>
<comment type="catalytic activity">
    <reaction evidence="1">
        <text>5-O-(1-carboxyvinyl)-3-phosphoshikimate = chorismate + phosphate</text>
        <dbReference type="Rhea" id="RHEA:21020"/>
        <dbReference type="ChEBI" id="CHEBI:29748"/>
        <dbReference type="ChEBI" id="CHEBI:43474"/>
        <dbReference type="ChEBI" id="CHEBI:57701"/>
        <dbReference type="EC" id="4.2.3.5"/>
    </reaction>
</comment>
<comment type="cofactor">
    <cofactor evidence="1">
        <name>FMNH2</name>
        <dbReference type="ChEBI" id="CHEBI:57618"/>
    </cofactor>
    <text evidence="1">Reduced FMN (FMNH(2)).</text>
</comment>
<comment type="pathway">
    <text evidence="1">Metabolic intermediate biosynthesis; chorismate biosynthesis; chorismate from D-erythrose 4-phosphate and phosphoenolpyruvate: step 7/7.</text>
</comment>
<comment type="subunit">
    <text evidence="1">Homotetramer.</text>
</comment>
<comment type="similarity">
    <text evidence="1">Belongs to the chorismate synthase family.</text>
</comment>
<accession>A6WWB6</accession>